<protein>
    <recommendedName>
        <fullName evidence="1">Small ribosomal subunit protein uS8</fullName>
    </recommendedName>
    <alternativeName>
        <fullName evidence="2">30S ribosomal protein S8</fullName>
    </alternativeName>
</protein>
<evidence type="ECO:0000255" key="1">
    <source>
        <dbReference type="HAMAP-Rule" id="MF_01302"/>
    </source>
</evidence>
<evidence type="ECO:0000305" key="2"/>
<organism>
    <name type="scientific">Chlamydia felis (strain Fe/C-56)</name>
    <name type="common">Chlamydophila felis</name>
    <dbReference type="NCBI Taxonomy" id="264202"/>
    <lineage>
        <taxon>Bacteria</taxon>
        <taxon>Pseudomonadati</taxon>
        <taxon>Chlamydiota</taxon>
        <taxon>Chlamydiia</taxon>
        <taxon>Chlamydiales</taxon>
        <taxon>Chlamydiaceae</taxon>
        <taxon>Chlamydia/Chlamydophila group</taxon>
        <taxon>Chlamydia</taxon>
    </lineage>
</organism>
<dbReference type="EMBL" id="AP006861">
    <property type="protein sequence ID" value="BAE81672.1"/>
    <property type="molecule type" value="Genomic_DNA"/>
</dbReference>
<dbReference type="RefSeq" id="WP_011458446.1">
    <property type="nucleotide sequence ID" value="NC_007899.1"/>
</dbReference>
<dbReference type="SMR" id="Q252W6"/>
<dbReference type="STRING" id="264202.CF0900"/>
<dbReference type="KEGG" id="cfe:CF0900"/>
<dbReference type="eggNOG" id="COG0096">
    <property type="taxonomic scope" value="Bacteria"/>
</dbReference>
<dbReference type="HOGENOM" id="CLU_098428_0_2_0"/>
<dbReference type="OrthoDB" id="9802617at2"/>
<dbReference type="Proteomes" id="UP000001260">
    <property type="component" value="Chromosome"/>
</dbReference>
<dbReference type="GO" id="GO:1990904">
    <property type="term" value="C:ribonucleoprotein complex"/>
    <property type="evidence" value="ECO:0007669"/>
    <property type="project" value="UniProtKB-KW"/>
</dbReference>
<dbReference type="GO" id="GO:0005840">
    <property type="term" value="C:ribosome"/>
    <property type="evidence" value="ECO:0007669"/>
    <property type="project" value="UniProtKB-KW"/>
</dbReference>
<dbReference type="GO" id="GO:0019843">
    <property type="term" value="F:rRNA binding"/>
    <property type="evidence" value="ECO:0007669"/>
    <property type="project" value="UniProtKB-UniRule"/>
</dbReference>
<dbReference type="GO" id="GO:0003735">
    <property type="term" value="F:structural constituent of ribosome"/>
    <property type="evidence" value="ECO:0007669"/>
    <property type="project" value="InterPro"/>
</dbReference>
<dbReference type="GO" id="GO:0006412">
    <property type="term" value="P:translation"/>
    <property type="evidence" value="ECO:0007669"/>
    <property type="project" value="UniProtKB-UniRule"/>
</dbReference>
<dbReference type="FunFam" id="3.30.1370.30:FF:000002">
    <property type="entry name" value="30S ribosomal protein S8"/>
    <property type="match status" value="1"/>
</dbReference>
<dbReference type="FunFam" id="3.30.1490.10:FF:000001">
    <property type="entry name" value="30S ribosomal protein S8"/>
    <property type="match status" value="1"/>
</dbReference>
<dbReference type="Gene3D" id="3.30.1370.30">
    <property type="match status" value="1"/>
</dbReference>
<dbReference type="Gene3D" id="3.30.1490.10">
    <property type="match status" value="1"/>
</dbReference>
<dbReference type="HAMAP" id="MF_01302_B">
    <property type="entry name" value="Ribosomal_uS8_B"/>
    <property type="match status" value="1"/>
</dbReference>
<dbReference type="InterPro" id="IPR000630">
    <property type="entry name" value="Ribosomal_uS8"/>
</dbReference>
<dbReference type="InterPro" id="IPR047863">
    <property type="entry name" value="Ribosomal_uS8_CS"/>
</dbReference>
<dbReference type="InterPro" id="IPR035987">
    <property type="entry name" value="Ribosomal_uS8_sf"/>
</dbReference>
<dbReference type="NCBIfam" id="NF001109">
    <property type="entry name" value="PRK00136.1"/>
    <property type="match status" value="1"/>
</dbReference>
<dbReference type="PANTHER" id="PTHR11758">
    <property type="entry name" value="40S RIBOSOMAL PROTEIN S15A"/>
    <property type="match status" value="1"/>
</dbReference>
<dbReference type="Pfam" id="PF00410">
    <property type="entry name" value="Ribosomal_S8"/>
    <property type="match status" value="1"/>
</dbReference>
<dbReference type="SUPFAM" id="SSF56047">
    <property type="entry name" value="Ribosomal protein S8"/>
    <property type="match status" value="1"/>
</dbReference>
<dbReference type="PROSITE" id="PS00053">
    <property type="entry name" value="RIBOSOMAL_S8"/>
    <property type="match status" value="1"/>
</dbReference>
<proteinExistence type="inferred from homology"/>
<sequence>MGMTSDTIADLLTRIRNALKAEHLYVDLEHSKMRESIVKILKHHGFLARYLVKEENRKRTMRIFLQYSDDRRPVIRQLKRVSKPSRRVYVPAAKIPYVFGNMGISVLSTSQGVLDGSTARAKNIGGELLCLVW</sequence>
<keyword id="KW-0687">Ribonucleoprotein</keyword>
<keyword id="KW-0689">Ribosomal protein</keyword>
<keyword id="KW-0694">RNA-binding</keyword>
<keyword id="KW-0699">rRNA-binding</keyword>
<accession>Q252W6</accession>
<name>RS8_CHLFF</name>
<gene>
    <name evidence="1" type="primary">rpsH</name>
    <name type="ordered locus">CF0900</name>
</gene>
<feature type="chain" id="PRO_0000290818" description="Small ribosomal subunit protein uS8">
    <location>
        <begin position="1"/>
        <end position="133"/>
    </location>
</feature>
<comment type="function">
    <text evidence="1">One of the primary rRNA binding proteins, it binds directly to 16S rRNA central domain where it helps coordinate assembly of the platform of the 30S subunit.</text>
</comment>
<comment type="subunit">
    <text evidence="1">Part of the 30S ribosomal subunit. Contacts proteins S5 and S12.</text>
</comment>
<comment type="similarity">
    <text evidence="1">Belongs to the universal ribosomal protein uS8 family.</text>
</comment>
<reference key="1">
    <citation type="journal article" date="2006" name="DNA Res.">
        <title>Genome sequence of the cat pathogen, Chlamydophila felis.</title>
        <authorList>
            <person name="Azuma Y."/>
            <person name="Hirakawa H."/>
            <person name="Yamashita A."/>
            <person name="Cai Y."/>
            <person name="Rahman M.A."/>
            <person name="Suzuki H."/>
            <person name="Mitaku S."/>
            <person name="Toh H."/>
            <person name="Goto S."/>
            <person name="Murakami T."/>
            <person name="Sugi K."/>
            <person name="Hayashi H."/>
            <person name="Fukushi H."/>
            <person name="Hattori M."/>
            <person name="Kuhara S."/>
            <person name="Shirai M."/>
        </authorList>
    </citation>
    <scope>NUCLEOTIDE SEQUENCE [LARGE SCALE GENOMIC DNA]</scope>
    <source>
        <strain>Fe/C-56</strain>
    </source>
</reference>